<name>RUVB_RHIE6</name>
<feature type="chain" id="PRO_1000089667" description="Holliday junction branch migration complex subunit RuvB">
    <location>
        <begin position="1"/>
        <end position="346"/>
    </location>
</feature>
<feature type="region of interest" description="Large ATPase domain (RuvB-L)" evidence="1">
    <location>
        <begin position="1"/>
        <end position="182"/>
    </location>
</feature>
<feature type="region of interest" description="Small ATPAse domain (RuvB-S)" evidence="1">
    <location>
        <begin position="183"/>
        <end position="253"/>
    </location>
</feature>
<feature type="region of interest" description="Head domain (RuvB-H)" evidence="1">
    <location>
        <begin position="256"/>
        <end position="346"/>
    </location>
</feature>
<feature type="binding site" evidence="1">
    <location>
        <position position="21"/>
    </location>
    <ligand>
        <name>ATP</name>
        <dbReference type="ChEBI" id="CHEBI:30616"/>
    </ligand>
</feature>
<feature type="binding site" evidence="1">
    <location>
        <position position="22"/>
    </location>
    <ligand>
        <name>ATP</name>
        <dbReference type="ChEBI" id="CHEBI:30616"/>
    </ligand>
</feature>
<feature type="binding site" evidence="1">
    <location>
        <position position="63"/>
    </location>
    <ligand>
        <name>ATP</name>
        <dbReference type="ChEBI" id="CHEBI:30616"/>
    </ligand>
</feature>
<feature type="binding site" evidence="1">
    <location>
        <position position="66"/>
    </location>
    <ligand>
        <name>ATP</name>
        <dbReference type="ChEBI" id="CHEBI:30616"/>
    </ligand>
</feature>
<feature type="binding site" evidence="1">
    <location>
        <position position="67"/>
    </location>
    <ligand>
        <name>ATP</name>
        <dbReference type="ChEBI" id="CHEBI:30616"/>
    </ligand>
</feature>
<feature type="binding site" evidence="1">
    <location>
        <position position="67"/>
    </location>
    <ligand>
        <name>Mg(2+)</name>
        <dbReference type="ChEBI" id="CHEBI:18420"/>
    </ligand>
</feature>
<feature type="binding site" evidence="1">
    <location>
        <position position="68"/>
    </location>
    <ligand>
        <name>ATP</name>
        <dbReference type="ChEBI" id="CHEBI:30616"/>
    </ligand>
</feature>
<feature type="binding site" evidence="1">
    <location>
        <begin position="129"/>
        <end position="131"/>
    </location>
    <ligand>
        <name>ATP</name>
        <dbReference type="ChEBI" id="CHEBI:30616"/>
    </ligand>
</feature>
<feature type="binding site" evidence="1">
    <location>
        <position position="172"/>
    </location>
    <ligand>
        <name>ATP</name>
        <dbReference type="ChEBI" id="CHEBI:30616"/>
    </ligand>
</feature>
<feature type="binding site" evidence="1">
    <location>
        <position position="182"/>
    </location>
    <ligand>
        <name>ATP</name>
        <dbReference type="ChEBI" id="CHEBI:30616"/>
    </ligand>
</feature>
<feature type="binding site" evidence="1">
    <location>
        <position position="219"/>
    </location>
    <ligand>
        <name>ATP</name>
        <dbReference type="ChEBI" id="CHEBI:30616"/>
    </ligand>
</feature>
<feature type="binding site" evidence="1">
    <location>
        <position position="292"/>
    </location>
    <ligand>
        <name>DNA</name>
        <dbReference type="ChEBI" id="CHEBI:16991"/>
    </ligand>
</feature>
<feature type="binding site" evidence="1">
    <location>
        <position position="311"/>
    </location>
    <ligand>
        <name>DNA</name>
        <dbReference type="ChEBI" id="CHEBI:16991"/>
    </ligand>
</feature>
<feature type="binding site" evidence="1">
    <location>
        <position position="316"/>
    </location>
    <ligand>
        <name>DNA</name>
        <dbReference type="ChEBI" id="CHEBI:16991"/>
    </ligand>
</feature>
<sequence>MSEPARLISPEKRGEDLDMTLRPQSLDEFTGQAEARANLKVFIEAAKNRGEALDHVLFVGPPGLGKTTLAQIMAKELGVNFRSTSGPVIAKAGDLAALLTNLEERDVLFIDEIHRLNPAVEEILYPAMEDFQLDLIIGEGPAARSVKIDLSKFTLVAATTRLGLLTTPLRDRFGIPVRLSFYTVEELELIVRRGARLMNLPMTEEGAREIARRARGTPRIAGRLLRRVRDFAEVARAEAVTREIADEALTRLLVDNVGFDQLDKRYLNMIAVNFGGGPVGIETIAAGLSEPRDAIEDIIEPYMIQQGFIQRTPRGRVLTAIAWKHLGMQPPKEMEAAQFRLFQEDD</sequence>
<organism>
    <name type="scientific">Rhizobium etli (strain CIAT 652)</name>
    <dbReference type="NCBI Taxonomy" id="491916"/>
    <lineage>
        <taxon>Bacteria</taxon>
        <taxon>Pseudomonadati</taxon>
        <taxon>Pseudomonadota</taxon>
        <taxon>Alphaproteobacteria</taxon>
        <taxon>Hyphomicrobiales</taxon>
        <taxon>Rhizobiaceae</taxon>
        <taxon>Rhizobium/Agrobacterium group</taxon>
        <taxon>Rhizobium</taxon>
    </lineage>
</organism>
<gene>
    <name evidence="1" type="primary">ruvB</name>
    <name type="ordered locus">RHECIAT_CH0003721</name>
</gene>
<protein>
    <recommendedName>
        <fullName evidence="1">Holliday junction branch migration complex subunit RuvB</fullName>
        <ecNumber evidence="1">3.6.4.-</ecNumber>
    </recommendedName>
</protein>
<reference key="1">
    <citation type="journal article" date="2010" name="Appl. Environ. Microbiol.">
        <title>Conserved symbiotic plasmid DNA sequences in the multireplicon pangenomic structure of Rhizobium etli.</title>
        <authorList>
            <person name="Gonzalez V."/>
            <person name="Acosta J.L."/>
            <person name="Santamaria R.I."/>
            <person name="Bustos P."/>
            <person name="Fernandez J.L."/>
            <person name="Hernandez Gonzalez I.L."/>
            <person name="Diaz R."/>
            <person name="Flores M."/>
            <person name="Palacios R."/>
            <person name="Mora J."/>
            <person name="Davila G."/>
        </authorList>
    </citation>
    <scope>NUCLEOTIDE SEQUENCE [LARGE SCALE GENOMIC DNA]</scope>
    <source>
        <strain>CIAT 652</strain>
    </source>
</reference>
<proteinExistence type="inferred from homology"/>
<evidence type="ECO:0000255" key="1">
    <source>
        <dbReference type="HAMAP-Rule" id="MF_00016"/>
    </source>
</evidence>
<keyword id="KW-0067">ATP-binding</keyword>
<keyword id="KW-0963">Cytoplasm</keyword>
<keyword id="KW-0227">DNA damage</keyword>
<keyword id="KW-0233">DNA recombination</keyword>
<keyword id="KW-0234">DNA repair</keyword>
<keyword id="KW-0238">DNA-binding</keyword>
<keyword id="KW-0378">Hydrolase</keyword>
<keyword id="KW-0547">Nucleotide-binding</keyword>
<accession>B3PYZ5</accession>
<dbReference type="EC" id="3.6.4.-" evidence="1"/>
<dbReference type="EMBL" id="CP001074">
    <property type="protein sequence ID" value="ACE92659.1"/>
    <property type="molecule type" value="Genomic_DNA"/>
</dbReference>
<dbReference type="SMR" id="B3PYZ5"/>
<dbReference type="KEGG" id="rec:RHECIAT_CH0003721"/>
<dbReference type="eggNOG" id="COG2255">
    <property type="taxonomic scope" value="Bacteria"/>
</dbReference>
<dbReference type="HOGENOM" id="CLU_055599_1_0_5"/>
<dbReference type="Proteomes" id="UP000008817">
    <property type="component" value="Chromosome"/>
</dbReference>
<dbReference type="GO" id="GO:0005737">
    <property type="term" value="C:cytoplasm"/>
    <property type="evidence" value="ECO:0007669"/>
    <property type="project" value="UniProtKB-SubCell"/>
</dbReference>
<dbReference type="GO" id="GO:0048476">
    <property type="term" value="C:Holliday junction resolvase complex"/>
    <property type="evidence" value="ECO:0007669"/>
    <property type="project" value="UniProtKB-UniRule"/>
</dbReference>
<dbReference type="GO" id="GO:0005524">
    <property type="term" value="F:ATP binding"/>
    <property type="evidence" value="ECO:0007669"/>
    <property type="project" value="UniProtKB-UniRule"/>
</dbReference>
<dbReference type="GO" id="GO:0016887">
    <property type="term" value="F:ATP hydrolysis activity"/>
    <property type="evidence" value="ECO:0007669"/>
    <property type="project" value="InterPro"/>
</dbReference>
<dbReference type="GO" id="GO:0000400">
    <property type="term" value="F:four-way junction DNA binding"/>
    <property type="evidence" value="ECO:0007669"/>
    <property type="project" value="UniProtKB-UniRule"/>
</dbReference>
<dbReference type="GO" id="GO:0009378">
    <property type="term" value="F:four-way junction helicase activity"/>
    <property type="evidence" value="ECO:0007669"/>
    <property type="project" value="InterPro"/>
</dbReference>
<dbReference type="GO" id="GO:0006310">
    <property type="term" value="P:DNA recombination"/>
    <property type="evidence" value="ECO:0007669"/>
    <property type="project" value="UniProtKB-UniRule"/>
</dbReference>
<dbReference type="GO" id="GO:0006281">
    <property type="term" value="P:DNA repair"/>
    <property type="evidence" value="ECO:0007669"/>
    <property type="project" value="UniProtKB-UniRule"/>
</dbReference>
<dbReference type="CDD" id="cd00009">
    <property type="entry name" value="AAA"/>
    <property type="match status" value="1"/>
</dbReference>
<dbReference type="Gene3D" id="1.10.8.60">
    <property type="match status" value="1"/>
</dbReference>
<dbReference type="Gene3D" id="3.40.50.300">
    <property type="entry name" value="P-loop containing nucleotide triphosphate hydrolases"/>
    <property type="match status" value="1"/>
</dbReference>
<dbReference type="Gene3D" id="1.10.10.10">
    <property type="entry name" value="Winged helix-like DNA-binding domain superfamily/Winged helix DNA-binding domain"/>
    <property type="match status" value="1"/>
</dbReference>
<dbReference type="HAMAP" id="MF_00016">
    <property type="entry name" value="DNA_HJ_migration_RuvB"/>
    <property type="match status" value="1"/>
</dbReference>
<dbReference type="InterPro" id="IPR003593">
    <property type="entry name" value="AAA+_ATPase"/>
</dbReference>
<dbReference type="InterPro" id="IPR041445">
    <property type="entry name" value="AAA_lid_4"/>
</dbReference>
<dbReference type="InterPro" id="IPR000641">
    <property type="entry name" value="CbxX/CfxQ"/>
</dbReference>
<dbReference type="InterPro" id="IPR004605">
    <property type="entry name" value="DNA_helicase_Holl-junc_RuvB"/>
</dbReference>
<dbReference type="InterPro" id="IPR027417">
    <property type="entry name" value="P-loop_NTPase"/>
</dbReference>
<dbReference type="InterPro" id="IPR008824">
    <property type="entry name" value="RuvB-like_N"/>
</dbReference>
<dbReference type="InterPro" id="IPR008823">
    <property type="entry name" value="RuvB_C"/>
</dbReference>
<dbReference type="InterPro" id="IPR036388">
    <property type="entry name" value="WH-like_DNA-bd_sf"/>
</dbReference>
<dbReference type="InterPro" id="IPR036390">
    <property type="entry name" value="WH_DNA-bd_sf"/>
</dbReference>
<dbReference type="NCBIfam" id="NF000868">
    <property type="entry name" value="PRK00080.1"/>
    <property type="match status" value="1"/>
</dbReference>
<dbReference type="NCBIfam" id="TIGR00635">
    <property type="entry name" value="ruvB"/>
    <property type="match status" value="1"/>
</dbReference>
<dbReference type="PANTHER" id="PTHR42848">
    <property type="match status" value="1"/>
</dbReference>
<dbReference type="PANTHER" id="PTHR42848:SF1">
    <property type="entry name" value="HOLLIDAY JUNCTION BRANCH MIGRATION COMPLEX SUBUNIT RUVB"/>
    <property type="match status" value="1"/>
</dbReference>
<dbReference type="Pfam" id="PF17864">
    <property type="entry name" value="AAA_lid_4"/>
    <property type="match status" value="1"/>
</dbReference>
<dbReference type="Pfam" id="PF05491">
    <property type="entry name" value="RuvB_C"/>
    <property type="match status" value="1"/>
</dbReference>
<dbReference type="Pfam" id="PF05496">
    <property type="entry name" value="RuvB_N"/>
    <property type="match status" value="1"/>
</dbReference>
<dbReference type="PRINTS" id="PR00819">
    <property type="entry name" value="CBXCFQXSUPER"/>
</dbReference>
<dbReference type="SMART" id="SM00382">
    <property type="entry name" value="AAA"/>
    <property type="match status" value="1"/>
</dbReference>
<dbReference type="SUPFAM" id="SSF52540">
    <property type="entry name" value="P-loop containing nucleoside triphosphate hydrolases"/>
    <property type="match status" value="1"/>
</dbReference>
<dbReference type="SUPFAM" id="SSF46785">
    <property type="entry name" value="Winged helix' DNA-binding domain"/>
    <property type="match status" value="1"/>
</dbReference>
<comment type="function">
    <text evidence="1">The RuvA-RuvB-RuvC complex processes Holliday junction (HJ) DNA during genetic recombination and DNA repair, while the RuvA-RuvB complex plays an important role in the rescue of blocked DNA replication forks via replication fork reversal (RFR). RuvA specifically binds to HJ cruciform DNA, conferring on it an open structure. The RuvB hexamer acts as an ATP-dependent pump, pulling dsDNA into and through the RuvAB complex. RuvB forms 2 homohexamers on either side of HJ DNA bound by 1 or 2 RuvA tetramers; 4 subunits per hexamer contact DNA at a time. Coordinated motions by a converter formed by DNA-disengaged RuvB subunits stimulates ATP hydrolysis and nucleotide exchange. Immobilization of the converter enables RuvB to convert the ATP-contained energy into a lever motion, pulling 2 nucleotides of DNA out of the RuvA tetramer per ATP hydrolyzed, thus driving DNA branch migration. The RuvB motors rotate together with the DNA substrate, which together with the progressing nucleotide cycle form the mechanistic basis for DNA recombination by continuous HJ branch migration. Branch migration allows RuvC to scan DNA until it finds its consensus sequence, where it cleaves and resolves cruciform DNA.</text>
</comment>
<comment type="catalytic activity">
    <reaction evidence="1">
        <text>ATP + H2O = ADP + phosphate + H(+)</text>
        <dbReference type="Rhea" id="RHEA:13065"/>
        <dbReference type="ChEBI" id="CHEBI:15377"/>
        <dbReference type="ChEBI" id="CHEBI:15378"/>
        <dbReference type="ChEBI" id="CHEBI:30616"/>
        <dbReference type="ChEBI" id="CHEBI:43474"/>
        <dbReference type="ChEBI" id="CHEBI:456216"/>
    </reaction>
</comment>
<comment type="subunit">
    <text evidence="1">Homohexamer. Forms an RuvA(8)-RuvB(12)-Holliday junction (HJ) complex. HJ DNA is sandwiched between 2 RuvA tetramers; dsDNA enters through RuvA and exits via RuvB. An RuvB hexamer assembles on each DNA strand where it exits the tetramer. Each RuvB hexamer is contacted by two RuvA subunits (via domain III) on 2 adjacent RuvB subunits; this complex drives branch migration. In the full resolvosome a probable DNA-RuvA(4)-RuvB(12)-RuvC(2) complex forms which resolves the HJ.</text>
</comment>
<comment type="subcellular location">
    <subcellularLocation>
        <location evidence="1">Cytoplasm</location>
    </subcellularLocation>
</comment>
<comment type="domain">
    <text evidence="1">Has 3 domains, the large (RuvB-L) and small ATPase (RuvB-S) domains and the C-terminal head (RuvB-H) domain. The head domain binds DNA, while the ATPase domains jointly bind ATP, ADP or are empty depending on the state of the subunit in the translocation cycle. During a single DNA translocation step the structure of each domain remains the same, but their relative positions change.</text>
</comment>
<comment type="similarity">
    <text evidence="1">Belongs to the RuvB family.</text>
</comment>